<feature type="chain" id="PRO_0000299514" description="UPF0312 protein SAOUHSC_03022">
    <location>
        <begin position="1"/>
        <end position="171"/>
    </location>
</feature>
<name>Y3022_STAA8</name>
<proteinExistence type="inferred from homology"/>
<evidence type="ECO:0000305" key="1"/>
<gene>
    <name type="ordered locus">SAOUHSC_03022</name>
</gene>
<dbReference type="EMBL" id="CP000253">
    <property type="protein sequence ID" value="ABD32008.1"/>
    <property type="molecule type" value="Genomic_DNA"/>
</dbReference>
<dbReference type="RefSeq" id="WP_000181129.1">
    <property type="nucleotide sequence ID" value="NZ_LS483365.1"/>
</dbReference>
<dbReference type="RefSeq" id="YP_501471.1">
    <property type="nucleotide sequence ID" value="NC_007795.1"/>
</dbReference>
<dbReference type="SMR" id="Q2FUS9"/>
<dbReference type="PaxDb" id="1280-SAXN108_2961"/>
<dbReference type="GeneID" id="3921289"/>
<dbReference type="KEGG" id="sao:SAOUHSC_03022"/>
<dbReference type="PATRIC" id="fig|93061.5.peg.2730"/>
<dbReference type="eggNOG" id="COG2353">
    <property type="taxonomic scope" value="Bacteria"/>
</dbReference>
<dbReference type="HOGENOM" id="CLU_071003_3_0_9"/>
<dbReference type="OrthoDB" id="9811006at2"/>
<dbReference type="PRO" id="PR:Q2FUS9"/>
<dbReference type="Proteomes" id="UP000008816">
    <property type="component" value="Chromosome"/>
</dbReference>
<dbReference type="GO" id="GO:0005615">
    <property type="term" value="C:extracellular space"/>
    <property type="evidence" value="ECO:0000318"/>
    <property type="project" value="GO_Central"/>
</dbReference>
<dbReference type="Gene3D" id="2.40.128.110">
    <property type="entry name" value="Lipid/polyisoprenoid-binding, YceI-like"/>
    <property type="match status" value="1"/>
</dbReference>
<dbReference type="InterPro" id="IPR007372">
    <property type="entry name" value="Lipid/polyisoprenoid-bd_YceI"/>
</dbReference>
<dbReference type="InterPro" id="IPR036761">
    <property type="entry name" value="TTHA0802/YceI-like_sf"/>
</dbReference>
<dbReference type="PANTHER" id="PTHR34406">
    <property type="entry name" value="PROTEIN YCEI"/>
    <property type="match status" value="1"/>
</dbReference>
<dbReference type="PANTHER" id="PTHR34406:SF1">
    <property type="entry name" value="PROTEIN YCEI"/>
    <property type="match status" value="1"/>
</dbReference>
<dbReference type="Pfam" id="PF04264">
    <property type="entry name" value="YceI"/>
    <property type="match status" value="1"/>
</dbReference>
<dbReference type="SMART" id="SM00867">
    <property type="entry name" value="YceI"/>
    <property type="match status" value="1"/>
</dbReference>
<dbReference type="SUPFAM" id="SSF101874">
    <property type="entry name" value="YceI-like"/>
    <property type="match status" value="1"/>
</dbReference>
<comment type="similarity">
    <text evidence="1">Belongs to the UPF0312 family.</text>
</comment>
<protein>
    <recommendedName>
        <fullName>UPF0312 protein SAOUHSC_03022</fullName>
    </recommendedName>
</protein>
<sequence>MTNFTFDGAHSSLEFQIKHLMVSKVKGSFDQFDVAVEGDINDFSTLKATATIIPSSINTKNEARDNHLKSGDFFGTDEFDKITFVTKSVSESKVVGDLTIKGITNEETFDVEFNGVSKNPMDGSQVTGIIVTGTINREKYGINFNQALETGGVMLGKDVKFEASAEFSISE</sequence>
<keyword id="KW-1185">Reference proteome</keyword>
<accession>Q2FUS9</accession>
<reference key="1">
    <citation type="book" date="2006" name="Gram positive pathogens, 2nd edition">
        <title>The Staphylococcus aureus NCTC 8325 genome.</title>
        <editorList>
            <person name="Fischetti V."/>
            <person name="Novick R."/>
            <person name="Ferretti J."/>
            <person name="Portnoy D."/>
            <person name="Rood J."/>
        </editorList>
        <authorList>
            <person name="Gillaspy A.F."/>
            <person name="Worrell V."/>
            <person name="Orvis J."/>
            <person name="Roe B.A."/>
            <person name="Dyer D.W."/>
            <person name="Iandolo J.J."/>
        </authorList>
    </citation>
    <scope>NUCLEOTIDE SEQUENCE [LARGE SCALE GENOMIC DNA]</scope>
    <source>
        <strain>NCTC 8325 / PS 47</strain>
    </source>
</reference>
<organism>
    <name type="scientific">Staphylococcus aureus (strain NCTC 8325 / PS 47)</name>
    <dbReference type="NCBI Taxonomy" id="93061"/>
    <lineage>
        <taxon>Bacteria</taxon>
        <taxon>Bacillati</taxon>
        <taxon>Bacillota</taxon>
        <taxon>Bacilli</taxon>
        <taxon>Bacillales</taxon>
        <taxon>Staphylococcaceae</taxon>
        <taxon>Staphylococcus</taxon>
    </lineage>
</organism>